<keyword id="KW-1185">Reference proteome</keyword>
<sequence>MPNNAQAFVNVQTTVIPKTAFTAHDFVNYTLPKDKKKQNDTENKKKQPKDGENDKQKEQAETQPFEWIQQKDADDKKESNTANTSDSLAYADFAVLELTLFLDNPVDKKVFDHFIQPAIKTYEQLGNSLKLFAKPTLTELKNHRYYLSGYPFLENKVNVLSVNQIKKDTSTETTINGQTVQQSNHEQPLIVRSTIAKPTLIRNQGDDFNGSNWVWNYDNSRVFRF</sequence>
<evidence type="ECO:0000256" key="1">
    <source>
        <dbReference type="SAM" id="MobiDB-lite"/>
    </source>
</evidence>
<evidence type="ECO:0000305" key="2"/>
<proteinExistence type="inferred from homology"/>
<organism>
    <name type="scientific">Mycoplasma pneumoniae (strain ATCC 29342 / M129 / Subtype 1)</name>
    <name type="common">Mycoplasmoides pneumoniae</name>
    <dbReference type="NCBI Taxonomy" id="272634"/>
    <lineage>
        <taxon>Bacteria</taxon>
        <taxon>Bacillati</taxon>
        <taxon>Mycoplasmatota</taxon>
        <taxon>Mycoplasmoidales</taxon>
        <taxon>Mycoplasmoidaceae</taxon>
        <taxon>Mycoplasmoides</taxon>
    </lineage>
</organism>
<accession>P75197</accession>
<reference key="1">
    <citation type="journal article" date="1996" name="Nucleic Acids Res.">
        <title>Complete sequence analysis of the genome of the bacterium Mycoplasma pneumoniae.</title>
        <authorList>
            <person name="Himmelreich R."/>
            <person name="Hilbert H."/>
            <person name="Plagens H."/>
            <person name="Pirkl E."/>
            <person name="Li B.-C."/>
            <person name="Herrmann R."/>
        </authorList>
    </citation>
    <scope>NUCLEOTIDE SEQUENCE [LARGE SCALE GENOMIC DNA]</scope>
    <source>
        <strain>ATCC 29342 / M129 / Subtype 1</strain>
    </source>
</reference>
<comment type="similarity">
    <text evidence="2">Belongs to the MG067/MG068/MG395 family.</text>
</comment>
<gene>
    <name type="ordered locus">MPN_583</name>
    <name type="ORF">D02_orf225L</name>
    <name type="ORF">MP259</name>
</gene>
<protein>
    <recommendedName>
        <fullName>Uncharacterized protein MPN_583</fullName>
    </recommendedName>
</protein>
<name>Y583_MYCPN</name>
<feature type="chain" id="PRO_0000210732" description="Uncharacterized protein MPN_583">
    <location>
        <begin position="1"/>
        <end position="225"/>
    </location>
</feature>
<feature type="region of interest" description="Disordered" evidence="1">
    <location>
        <begin position="32"/>
        <end position="82"/>
    </location>
</feature>
<feature type="compositionally biased region" description="Basic and acidic residues" evidence="1">
    <location>
        <begin position="37"/>
        <end position="60"/>
    </location>
</feature>
<feature type="compositionally biased region" description="Basic and acidic residues" evidence="1">
    <location>
        <begin position="69"/>
        <end position="79"/>
    </location>
</feature>
<dbReference type="EMBL" id="U00089">
    <property type="protein sequence ID" value="AAB95907.1"/>
    <property type="molecule type" value="Genomic_DNA"/>
</dbReference>
<dbReference type="PIR" id="S73585">
    <property type="entry name" value="S73585"/>
</dbReference>
<dbReference type="RefSeq" id="NP_110272.1">
    <property type="nucleotide sequence ID" value="NC_000912.1"/>
</dbReference>
<dbReference type="EnsemblBacteria" id="AAB95907">
    <property type="protein sequence ID" value="AAB95907"/>
    <property type="gene ID" value="MPN_583"/>
</dbReference>
<dbReference type="KEGG" id="mpn:MPN_583"/>
<dbReference type="PATRIC" id="fig|272634.6.peg.645"/>
<dbReference type="HOGENOM" id="CLU_1228797_0_0_14"/>
<dbReference type="OrthoDB" id="395427at2"/>
<dbReference type="BioCyc" id="MPNE272634:G1GJ3-951-MONOMER"/>
<dbReference type="Proteomes" id="UP000000808">
    <property type="component" value="Chromosome"/>
</dbReference>
<dbReference type="InterPro" id="IPR022382">
    <property type="entry name" value="Mycoplasma_peptidase_DUF31"/>
</dbReference>
<dbReference type="Pfam" id="PF01732">
    <property type="entry name" value="Mycop_pep_DUF31"/>
    <property type="match status" value="1"/>
</dbReference>